<comment type="function">
    <text evidence="4 10">Mitochondrial enzyme that catalyzes the dephosphorylation and concomitant reactivation of the alpha subunit of the E1 component of the pyruvate dehydrogenase complex (PDC), thereby stimulating the conversion of pyruvate into acetyl-CoA.</text>
</comment>
<comment type="catalytic activity">
    <reaction evidence="4 10">
        <text>O-phospho-L-seryl-[pyruvate dehydrogenase E1 alpha subunit] + H2O = L-seryl-[pyruvate dehydrogenase E1 alpha subunit] + phosphate</text>
        <dbReference type="Rhea" id="RHEA:12669"/>
        <dbReference type="Rhea" id="RHEA-COMP:13689"/>
        <dbReference type="Rhea" id="RHEA-COMP:13690"/>
        <dbReference type="ChEBI" id="CHEBI:15377"/>
        <dbReference type="ChEBI" id="CHEBI:29999"/>
        <dbReference type="ChEBI" id="CHEBI:43474"/>
        <dbReference type="ChEBI" id="CHEBI:83421"/>
        <dbReference type="EC" id="3.1.3.43"/>
    </reaction>
    <physiologicalReaction direction="left-to-right" evidence="9">
        <dbReference type="Rhea" id="RHEA:12670"/>
    </physiologicalReaction>
</comment>
<comment type="cofactor">
    <cofactor evidence="2">
        <name>Mn(2+)</name>
        <dbReference type="ChEBI" id="CHEBI:29035"/>
    </cofactor>
    <cofactor evidence="1">
        <name>Mg(2+)</name>
        <dbReference type="ChEBI" id="CHEBI:18420"/>
    </cofactor>
    <text evidence="1 2">Binds 2 Mn2(+) per subunit (By similarity). Binds 2 Mg(2+) ions per subunit (By similarity). Mn(2+) can substitute Mg2(+) for catalytic activity (By similarity).</text>
</comment>
<comment type="activity regulation">
    <text evidence="2 4">Magnesium-dependent and calcium-stimulated (By similarity). PDP1 activity strongly depends on its Ca(2+)-dependent binding to the lipoyl domain of E2 subunit of component of the pyruvate dehydrogenase complex (PubMed:15554715).</text>
</comment>
<comment type="subunit">
    <text evidence="2">Heterodimer of a catalytic (PDP1) and a regulatory (PDPR) subunit.</text>
</comment>
<comment type="interaction">
    <interactant intactId="EBI-2861634">
        <id>Q9P0J1</id>
    </interactant>
    <interactant intactId="EBI-748628">
        <id>O43439</id>
        <label>CBFA2T2</label>
    </interactant>
    <organismsDiffer>false</organismsDiffer>
    <experiments>3</experiments>
</comment>
<comment type="interaction">
    <interactant intactId="EBI-2861634">
        <id>Q9P0J1</id>
    </interactant>
    <interactant intactId="EBI-6509505">
        <id>Q0VD86</id>
        <label>INCA1</label>
    </interactant>
    <organismsDiffer>false</organismsDiffer>
    <experiments>3</experiments>
</comment>
<comment type="interaction">
    <interactant intactId="EBI-2861634">
        <id>Q9P0J1</id>
    </interactant>
    <interactant intactId="EBI-11962084">
        <id>Q3LI66</id>
        <label>KRTAP6-2</label>
    </interactant>
    <organismsDiffer>false</organismsDiffer>
    <experiments>3</experiments>
</comment>
<comment type="interaction">
    <interactant intactId="EBI-2861634">
        <id>Q9P0J1</id>
    </interactant>
    <interactant intactId="EBI-16439278">
        <id>Q6FHY5</id>
        <label>MEOX2</label>
    </interactant>
    <organismsDiffer>false</organismsDiffer>
    <experiments>3</experiments>
</comment>
<comment type="subcellular location">
    <subcellularLocation>
        <location evidence="6">Mitochondrion</location>
    </subcellularLocation>
</comment>
<comment type="alternative products">
    <event type="alternative splicing"/>
    <isoform>
        <id>Q9P0J1-1</id>
        <name>1</name>
        <sequence type="displayed"/>
    </isoform>
    <isoform>
        <id>Q9P0J1-2</id>
        <name>2</name>
        <sequence type="described" ref="VSP_046869"/>
    </isoform>
</comment>
<comment type="disease" evidence="5 6">
    <disease id="DI-02240">
        <name>Pyruvate dehydrogenase phosphatase deficiency</name>
        <acronym>PDP deficiency</acronym>
        <description>Results in lactic acidosis leading to neurological dysfunction.</description>
        <dbReference type="MIM" id="608782"/>
    </disease>
    <text>The disease is caused by variants affecting the gene represented in this entry.</text>
</comment>
<comment type="similarity">
    <text evidence="8">Belongs to the PP2C family.</text>
</comment>
<comment type="sequence caution" evidence="8">
    <conflict type="erroneous initiation">
        <sequence resource="EMBL-CDS" id="AAF67480"/>
    </conflict>
</comment>
<accession>Q9P0J1</accession>
<accession>B3KX71</accession>
<accession>J3KPU0</accession>
<accession>Q5U5K1</accession>
<gene>
    <name evidence="11" type="primary">PDP1</name>
    <name type="synonym">PDP</name>
    <name type="synonym">PPM2C</name>
</gene>
<evidence type="ECO:0000250" key="1">
    <source>
        <dbReference type="UniProtKB" id="O88483"/>
    </source>
</evidence>
<evidence type="ECO:0000250" key="2">
    <source>
        <dbReference type="UniProtKB" id="P35816"/>
    </source>
</evidence>
<evidence type="ECO:0000255" key="3">
    <source>
        <dbReference type="PROSITE-ProRule" id="PRU01082"/>
    </source>
</evidence>
<evidence type="ECO:0000269" key="4">
    <source>
    </source>
</evidence>
<evidence type="ECO:0000269" key="5">
    <source>
    </source>
</evidence>
<evidence type="ECO:0000269" key="6">
    <source>
    </source>
</evidence>
<evidence type="ECO:0000303" key="7">
    <source>
    </source>
</evidence>
<evidence type="ECO:0000305" key="8"/>
<evidence type="ECO:0000305" key="9">
    <source>
    </source>
</evidence>
<evidence type="ECO:0000305" key="10">
    <source>
    </source>
</evidence>
<evidence type="ECO:0000312" key="11">
    <source>
        <dbReference type="HGNC" id="HGNC:9279"/>
    </source>
</evidence>
<evidence type="ECO:0007744" key="12">
    <source>
    </source>
</evidence>
<reference key="1">
    <citation type="journal article" date="2000" name="Proc. Natl. Acad. Sci. U.S.A.">
        <title>Gene expression profiling in the human hypothalamus-pituitary-adrenal axis and full-length cDNA cloning.</title>
        <authorList>
            <person name="Hu R.-M."/>
            <person name="Han Z.-G."/>
            <person name="Song H.-D."/>
            <person name="Peng Y.-D."/>
            <person name="Huang Q.-H."/>
            <person name="Ren S.-X."/>
            <person name="Gu Y.-J."/>
            <person name="Huang C.-H."/>
            <person name="Li Y.-B."/>
            <person name="Jiang C.-L."/>
            <person name="Fu G."/>
            <person name="Zhang Q.-H."/>
            <person name="Gu B.-W."/>
            <person name="Dai M."/>
            <person name="Mao Y.-F."/>
            <person name="Gao G.-F."/>
            <person name="Rong R."/>
            <person name="Ye M."/>
            <person name="Zhou J."/>
            <person name="Xu S.-H."/>
            <person name="Gu J."/>
            <person name="Shi J.-X."/>
            <person name="Jin W.-R."/>
            <person name="Zhang C.-K."/>
            <person name="Wu T.-M."/>
            <person name="Huang G.-Y."/>
            <person name="Chen Z."/>
            <person name="Chen M.-D."/>
            <person name="Chen J.-L."/>
        </authorList>
    </citation>
    <scope>NUCLEOTIDE SEQUENCE [LARGE SCALE MRNA] (ISOFORM 1)</scope>
    <source>
        <tissue>Adrenal gland</tissue>
    </source>
</reference>
<reference key="2">
    <citation type="journal article" date="2004" name="Nat. Genet.">
        <title>Complete sequencing and characterization of 21,243 full-length human cDNAs.</title>
        <authorList>
            <person name="Ota T."/>
            <person name="Suzuki Y."/>
            <person name="Nishikawa T."/>
            <person name="Otsuki T."/>
            <person name="Sugiyama T."/>
            <person name="Irie R."/>
            <person name="Wakamatsu A."/>
            <person name="Hayashi K."/>
            <person name="Sato H."/>
            <person name="Nagai K."/>
            <person name="Kimura K."/>
            <person name="Makita H."/>
            <person name="Sekine M."/>
            <person name="Obayashi M."/>
            <person name="Nishi T."/>
            <person name="Shibahara T."/>
            <person name="Tanaka T."/>
            <person name="Ishii S."/>
            <person name="Yamamoto J."/>
            <person name="Saito K."/>
            <person name="Kawai Y."/>
            <person name="Isono Y."/>
            <person name="Nakamura Y."/>
            <person name="Nagahari K."/>
            <person name="Murakami K."/>
            <person name="Yasuda T."/>
            <person name="Iwayanagi T."/>
            <person name="Wagatsuma M."/>
            <person name="Shiratori A."/>
            <person name="Sudo H."/>
            <person name="Hosoiri T."/>
            <person name="Kaku Y."/>
            <person name="Kodaira H."/>
            <person name="Kondo H."/>
            <person name="Sugawara M."/>
            <person name="Takahashi M."/>
            <person name="Kanda K."/>
            <person name="Yokoi T."/>
            <person name="Furuya T."/>
            <person name="Kikkawa E."/>
            <person name="Omura Y."/>
            <person name="Abe K."/>
            <person name="Kamihara K."/>
            <person name="Katsuta N."/>
            <person name="Sato K."/>
            <person name="Tanikawa M."/>
            <person name="Yamazaki M."/>
            <person name="Ninomiya K."/>
            <person name="Ishibashi T."/>
            <person name="Yamashita H."/>
            <person name="Murakawa K."/>
            <person name="Fujimori K."/>
            <person name="Tanai H."/>
            <person name="Kimata M."/>
            <person name="Watanabe M."/>
            <person name="Hiraoka S."/>
            <person name="Chiba Y."/>
            <person name="Ishida S."/>
            <person name="Ono Y."/>
            <person name="Takiguchi S."/>
            <person name="Watanabe S."/>
            <person name="Yosida M."/>
            <person name="Hotuta T."/>
            <person name="Kusano J."/>
            <person name="Kanehori K."/>
            <person name="Takahashi-Fujii A."/>
            <person name="Hara H."/>
            <person name="Tanase T.-O."/>
            <person name="Nomura Y."/>
            <person name="Togiya S."/>
            <person name="Komai F."/>
            <person name="Hara R."/>
            <person name="Takeuchi K."/>
            <person name="Arita M."/>
            <person name="Imose N."/>
            <person name="Musashino K."/>
            <person name="Yuuki H."/>
            <person name="Oshima A."/>
            <person name="Sasaki N."/>
            <person name="Aotsuka S."/>
            <person name="Yoshikawa Y."/>
            <person name="Matsunawa H."/>
            <person name="Ichihara T."/>
            <person name="Shiohata N."/>
            <person name="Sano S."/>
            <person name="Moriya S."/>
            <person name="Momiyama H."/>
            <person name="Satoh N."/>
            <person name="Takami S."/>
            <person name="Terashima Y."/>
            <person name="Suzuki O."/>
            <person name="Nakagawa S."/>
            <person name="Senoh A."/>
            <person name="Mizoguchi H."/>
            <person name="Goto Y."/>
            <person name="Shimizu F."/>
            <person name="Wakebe H."/>
            <person name="Hishigaki H."/>
            <person name="Watanabe T."/>
            <person name="Sugiyama A."/>
            <person name="Takemoto M."/>
            <person name="Kawakami B."/>
            <person name="Yamazaki M."/>
            <person name="Watanabe K."/>
            <person name="Kumagai A."/>
            <person name="Itakura S."/>
            <person name="Fukuzumi Y."/>
            <person name="Fujimori Y."/>
            <person name="Komiyama M."/>
            <person name="Tashiro H."/>
            <person name="Tanigami A."/>
            <person name="Fujiwara T."/>
            <person name="Ono T."/>
            <person name="Yamada K."/>
            <person name="Fujii Y."/>
            <person name="Ozaki K."/>
            <person name="Hirao M."/>
            <person name="Ohmori Y."/>
            <person name="Kawabata A."/>
            <person name="Hikiji T."/>
            <person name="Kobatake N."/>
            <person name="Inagaki H."/>
            <person name="Ikema Y."/>
            <person name="Okamoto S."/>
            <person name="Okitani R."/>
            <person name="Kawakami T."/>
            <person name="Noguchi S."/>
            <person name="Itoh T."/>
            <person name="Shigeta K."/>
            <person name="Senba T."/>
            <person name="Matsumura K."/>
            <person name="Nakajima Y."/>
            <person name="Mizuno T."/>
            <person name="Morinaga M."/>
            <person name="Sasaki M."/>
            <person name="Togashi T."/>
            <person name="Oyama M."/>
            <person name="Hata H."/>
            <person name="Watanabe M."/>
            <person name="Komatsu T."/>
            <person name="Mizushima-Sugano J."/>
            <person name="Satoh T."/>
            <person name="Shirai Y."/>
            <person name="Takahashi Y."/>
            <person name="Nakagawa K."/>
            <person name="Okumura K."/>
            <person name="Nagase T."/>
            <person name="Nomura N."/>
            <person name="Kikuchi H."/>
            <person name="Masuho Y."/>
            <person name="Yamashita R."/>
            <person name="Nakai K."/>
            <person name="Yada T."/>
            <person name="Nakamura Y."/>
            <person name="Ohara O."/>
            <person name="Isogai T."/>
            <person name="Sugano S."/>
        </authorList>
    </citation>
    <scope>NUCLEOTIDE SEQUENCE [LARGE SCALE MRNA] (ISOFORM 1)</scope>
    <scope>NUCLEOTIDE SEQUENCE [LARGE SCALE MRNA] OF 1-101 (ISOFORM 2)</scope>
    <source>
        <tissue>Amygdala</tissue>
        <tissue>Fetal brain</tissue>
    </source>
</reference>
<reference key="3">
    <citation type="journal article" date="2006" name="Nature">
        <title>DNA sequence and analysis of human chromosome 8.</title>
        <authorList>
            <person name="Nusbaum C."/>
            <person name="Mikkelsen T.S."/>
            <person name="Zody M.C."/>
            <person name="Asakawa S."/>
            <person name="Taudien S."/>
            <person name="Garber M."/>
            <person name="Kodira C.D."/>
            <person name="Schueler M.G."/>
            <person name="Shimizu A."/>
            <person name="Whittaker C.A."/>
            <person name="Chang J.L."/>
            <person name="Cuomo C.A."/>
            <person name="Dewar K."/>
            <person name="FitzGerald M.G."/>
            <person name="Yang X."/>
            <person name="Allen N.R."/>
            <person name="Anderson S."/>
            <person name="Asakawa T."/>
            <person name="Blechschmidt K."/>
            <person name="Bloom T."/>
            <person name="Borowsky M.L."/>
            <person name="Butler J."/>
            <person name="Cook A."/>
            <person name="Corum B."/>
            <person name="DeArellano K."/>
            <person name="DeCaprio D."/>
            <person name="Dooley K.T."/>
            <person name="Dorris L. III"/>
            <person name="Engels R."/>
            <person name="Gloeckner G."/>
            <person name="Hafez N."/>
            <person name="Hagopian D.S."/>
            <person name="Hall J.L."/>
            <person name="Ishikawa S.K."/>
            <person name="Jaffe D.B."/>
            <person name="Kamat A."/>
            <person name="Kudoh J."/>
            <person name="Lehmann R."/>
            <person name="Lokitsang T."/>
            <person name="Macdonald P."/>
            <person name="Major J.E."/>
            <person name="Matthews C.D."/>
            <person name="Mauceli E."/>
            <person name="Menzel U."/>
            <person name="Mihalev A.H."/>
            <person name="Minoshima S."/>
            <person name="Murayama Y."/>
            <person name="Naylor J.W."/>
            <person name="Nicol R."/>
            <person name="Nguyen C."/>
            <person name="O'Leary S.B."/>
            <person name="O'Neill K."/>
            <person name="Parker S.C.J."/>
            <person name="Polley A."/>
            <person name="Raymond C.K."/>
            <person name="Reichwald K."/>
            <person name="Rodriguez J."/>
            <person name="Sasaki T."/>
            <person name="Schilhabel M."/>
            <person name="Siddiqui R."/>
            <person name="Smith C.L."/>
            <person name="Sneddon T.P."/>
            <person name="Talamas J.A."/>
            <person name="Tenzin P."/>
            <person name="Topham K."/>
            <person name="Venkataraman V."/>
            <person name="Wen G."/>
            <person name="Yamazaki S."/>
            <person name="Young S.K."/>
            <person name="Zeng Q."/>
            <person name="Zimmer A.R."/>
            <person name="Rosenthal A."/>
            <person name="Birren B.W."/>
            <person name="Platzer M."/>
            <person name="Shimizu N."/>
            <person name="Lander E.S."/>
        </authorList>
    </citation>
    <scope>NUCLEOTIDE SEQUENCE [LARGE SCALE GENOMIC DNA]</scope>
</reference>
<reference key="4">
    <citation type="submission" date="2005-07" db="EMBL/GenBank/DDBJ databases">
        <authorList>
            <person name="Mural R.J."/>
            <person name="Istrail S."/>
            <person name="Sutton G.G."/>
            <person name="Florea L."/>
            <person name="Halpern A.L."/>
            <person name="Mobarry C.M."/>
            <person name="Lippert R."/>
            <person name="Walenz B."/>
            <person name="Shatkay H."/>
            <person name="Dew I."/>
            <person name="Miller J.R."/>
            <person name="Flanigan M.J."/>
            <person name="Edwards N.J."/>
            <person name="Bolanos R."/>
            <person name="Fasulo D."/>
            <person name="Halldorsson B.V."/>
            <person name="Hannenhalli S."/>
            <person name="Turner R."/>
            <person name="Yooseph S."/>
            <person name="Lu F."/>
            <person name="Nusskern D.R."/>
            <person name="Shue B.C."/>
            <person name="Zheng X.H."/>
            <person name="Zhong F."/>
            <person name="Delcher A.L."/>
            <person name="Huson D.H."/>
            <person name="Kravitz S.A."/>
            <person name="Mouchard L."/>
            <person name="Reinert K."/>
            <person name="Remington K.A."/>
            <person name="Clark A.G."/>
            <person name="Waterman M.S."/>
            <person name="Eichler E.E."/>
            <person name="Adams M.D."/>
            <person name="Hunkapiller M.W."/>
            <person name="Myers E.W."/>
            <person name="Venter J.C."/>
        </authorList>
    </citation>
    <scope>NUCLEOTIDE SEQUENCE [LARGE SCALE GENOMIC DNA]</scope>
</reference>
<reference key="5">
    <citation type="journal article" date="2004" name="Genome Res.">
        <title>The status, quality, and expansion of the NIH full-length cDNA project: the Mammalian Gene Collection (MGC).</title>
        <authorList>
            <consortium name="The MGC Project Team"/>
        </authorList>
    </citation>
    <scope>NUCLEOTIDE SEQUENCE [LARGE SCALE MRNA] (ISOFORM 1)</scope>
    <source>
        <tissue>Testis</tissue>
    </source>
</reference>
<reference key="6">
    <citation type="journal article" date="2009" name="Science">
        <title>Lysine acetylation targets protein complexes and co-regulates major cellular functions.</title>
        <authorList>
            <person name="Choudhary C."/>
            <person name="Kumar C."/>
            <person name="Gnad F."/>
            <person name="Nielsen M.L."/>
            <person name="Rehman M."/>
            <person name="Walther T.C."/>
            <person name="Olsen J.V."/>
            <person name="Mann M."/>
        </authorList>
    </citation>
    <scope>ACETYLATION [LARGE SCALE ANALYSIS] AT LYS-202</scope>
    <scope>IDENTIFICATION BY MASS SPECTROMETRY [LARGE SCALE ANALYSIS]</scope>
</reference>
<reference key="7">
    <citation type="journal article" date="2015" name="Proteomics">
        <title>N-terminome analysis of the human mitochondrial proteome.</title>
        <authorList>
            <person name="Vaca Jacome A.S."/>
            <person name="Rabilloud T."/>
            <person name="Schaeffer-Reiss C."/>
            <person name="Rompais M."/>
            <person name="Ayoub D."/>
            <person name="Lane L."/>
            <person name="Bairoch A."/>
            <person name="Van Dorsselaer A."/>
            <person name="Carapito C."/>
        </authorList>
    </citation>
    <scope>IDENTIFICATION BY MASS SPECTROMETRY [LARGE SCALE ANALYSIS]</scope>
</reference>
<reference key="8">
    <citation type="journal article" date="2004" name="Biochemistry">
        <title>Formation of a complex of the catalytic subunit of pyruvate dehydrogenase phosphatase isoform 1 (PDP1c) and the L2 domain forms a Ca2+ binding site and captures PDP1c as a monomer.</title>
        <authorList>
            <person name="Turkan A."/>
            <person name="Hiromasa Y."/>
            <person name="Roche T.E."/>
        </authorList>
    </citation>
    <scope>FUNCTION</scope>
    <scope>CATALYTIC ACTIVITY</scope>
    <scope>ACTIVITY REGULATION</scope>
</reference>
<reference key="9">
    <citation type="journal article" date="2005" name="J. Clin. Endocrinol. Metab.">
        <title>Pyruvate dehydrogenase phosphatase deficiency: identification of the first mutation in two brothers and restoration of activity by protein complementation.</title>
        <authorList>
            <person name="Maj M.C."/>
            <person name="MacKay N."/>
            <person name="Levandovskiy V."/>
            <person name="Addis J."/>
            <person name="Baumgartner E.R."/>
            <person name="Baumgartner M.R."/>
            <person name="Robinson B.H."/>
            <person name="Cameron J.M."/>
        </authorList>
    </citation>
    <scope>INVOLVEMENT IN PDP DEFICIENCY</scope>
    <scope>VARIANT PDP DEFICIENCY LEU-284 DEL</scope>
    <scope>CHARACTERIZATION OF VARIANT PDP DEFICIENCY LEU-284 DEL</scope>
    <scope>FUNCTION</scope>
    <scope>CATALYTIC ACTIVITY</scope>
</reference>
<reference key="10">
    <citation type="journal article" date="2009" name="Hum. Genet.">
        <title>Pyruvate dehydrogenase phosphatase 1 (PDP1) null mutation produces a lethal infantile phenotype.</title>
        <authorList>
            <person name="Cameron J.M."/>
            <person name="Maj M."/>
            <person name="Levandovskiy V."/>
            <person name="Barnett C.P."/>
            <person name="Blaser S."/>
            <person name="Mackay N."/>
            <person name="Raiman J."/>
            <person name="Feigenbaum A."/>
            <person name="Schulze A."/>
            <person name="Robinson B.H."/>
        </authorList>
    </citation>
    <scope>VARIANT PDP DEFICIENCY 93-GLU--GLU-537 DEL</scope>
    <scope>SUBCELLULAR LOCATION</scope>
</reference>
<keyword id="KW-0007">Acetylation</keyword>
<keyword id="KW-0025">Alternative splicing</keyword>
<keyword id="KW-0106">Calcium</keyword>
<keyword id="KW-0225">Disease variant</keyword>
<keyword id="KW-0378">Hydrolase</keyword>
<keyword id="KW-0460">Magnesium</keyword>
<keyword id="KW-0464">Manganese</keyword>
<keyword id="KW-0479">Metal-binding</keyword>
<keyword id="KW-0496">Mitochondrion</keyword>
<keyword id="KW-0904">Protein phosphatase</keyword>
<keyword id="KW-1267">Proteomics identification</keyword>
<keyword id="KW-1185">Reference proteome</keyword>
<keyword id="KW-0809">Transit peptide</keyword>
<organism>
    <name type="scientific">Homo sapiens</name>
    <name type="common">Human</name>
    <dbReference type="NCBI Taxonomy" id="9606"/>
    <lineage>
        <taxon>Eukaryota</taxon>
        <taxon>Metazoa</taxon>
        <taxon>Chordata</taxon>
        <taxon>Craniata</taxon>
        <taxon>Vertebrata</taxon>
        <taxon>Euteleostomi</taxon>
        <taxon>Mammalia</taxon>
        <taxon>Eutheria</taxon>
        <taxon>Euarchontoglires</taxon>
        <taxon>Primates</taxon>
        <taxon>Haplorrhini</taxon>
        <taxon>Catarrhini</taxon>
        <taxon>Hominidae</taxon>
        <taxon>Homo</taxon>
    </lineage>
</organism>
<protein>
    <recommendedName>
        <fullName>[Pyruvate dehydrogenase [acetyl-transferring]]-phosphatase 1, mitochondrial</fullName>
        <shortName>PDP 1</shortName>
        <ecNumber evidence="4 10">3.1.3.43</ecNumber>
    </recommendedName>
    <alternativeName>
        <fullName>Protein phosphatase 2C</fullName>
    </alternativeName>
    <alternativeName>
        <fullName>Pyruvate dehydrogenase phosphatase catalytic subunit 1</fullName>
        <shortName>PDPC 1</shortName>
    </alternativeName>
</protein>
<name>PDP1_HUMAN</name>
<feature type="transit peptide" description="Mitochondrion" evidence="2">
    <location>
        <begin position="1"/>
        <end position="71"/>
    </location>
</feature>
<feature type="chain" id="PRO_0000025419" description="[Pyruvate dehydrogenase [acetyl-transferring]]-phosphatase 1, mitochondrial">
    <location>
        <begin position="72"/>
        <end position="537"/>
    </location>
</feature>
<feature type="domain" description="PPM-type phosphatase" evidence="3">
    <location>
        <begin position="109"/>
        <end position="525"/>
    </location>
</feature>
<feature type="binding site" evidence="2">
    <location>
        <position position="144"/>
    </location>
    <ligand>
        <name>Mn(2+)</name>
        <dbReference type="ChEBI" id="CHEBI:29035"/>
        <label>1</label>
    </ligand>
</feature>
<feature type="binding site" evidence="2">
    <location>
        <position position="144"/>
    </location>
    <ligand>
        <name>Mn(2+)</name>
        <dbReference type="ChEBI" id="CHEBI:29035"/>
        <label>2</label>
    </ligand>
</feature>
<feature type="binding site" evidence="2">
    <location>
        <position position="145"/>
    </location>
    <ligand>
        <name>Mn(2+)</name>
        <dbReference type="ChEBI" id="CHEBI:29035"/>
        <label>1</label>
    </ligand>
</feature>
<feature type="binding site" evidence="2">
    <location>
        <position position="418"/>
    </location>
    <ligand>
        <name>Mn(2+)</name>
        <dbReference type="ChEBI" id="CHEBI:29035"/>
        <label>2</label>
    </ligand>
</feature>
<feature type="binding site" evidence="2">
    <location>
        <position position="516"/>
    </location>
    <ligand>
        <name>Mn(2+)</name>
        <dbReference type="ChEBI" id="CHEBI:29035"/>
        <label>2</label>
    </ligand>
</feature>
<feature type="modified residue" description="N6-acetyllysine" evidence="12">
    <location>
        <position position="202"/>
    </location>
</feature>
<feature type="splice variant" id="VSP_046869" description="In isoform 2." evidence="7">
    <original>M</original>
    <variation>MCVCPGPRRIGIPVRSSSLPLFSDAM</variation>
    <location>
        <position position="1"/>
    </location>
</feature>
<feature type="sequence variant" id="VAR_088547" description="In PDP deficiency." evidence="6">
    <location>
        <begin position="93"/>
        <end position="537"/>
    </location>
</feature>
<feature type="sequence variant" id="VAR_029882" description="In PDP deficiency; low phosphatase activity." evidence="5">
    <location>
        <position position="284"/>
    </location>
</feature>
<feature type="sequence conflict" description="In Ref. 1; AAF67480." evidence="8" ref="1">
    <original>NVSSILGFDSNQ</original>
    <variation>MSVLSLDLTAIK</variation>
    <location>
        <begin position="105"/>
        <end position="116"/>
    </location>
</feature>
<feature type="sequence conflict" description="In Ref. 1; AAF67480." evidence="8" ref="1">
    <original>C</original>
    <variation>W</variation>
    <location>
        <position position="151"/>
    </location>
</feature>
<feature type="sequence conflict" description="In Ref. 1; AAF67480." evidence="8" ref="1">
    <original>V</original>
    <variation>G</variation>
    <location>
        <position position="165"/>
    </location>
</feature>
<feature type="sequence conflict" description="In Ref. 1; AAF67480." evidence="8" ref="1">
    <original>L</original>
    <variation>V</variation>
    <location>
        <position position="168"/>
    </location>
</feature>
<feature type="sequence conflict" description="In Ref. 1; AAF67480." evidence="8" ref="1">
    <original>E</original>
    <variation>EK</variation>
    <location>
        <position position="537"/>
    </location>
</feature>
<dbReference type="EC" id="3.1.3.43" evidence="4 10"/>
<dbReference type="EMBL" id="AF155661">
    <property type="protein sequence ID" value="AAF67480.1"/>
    <property type="status" value="ALT_INIT"/>
    <property type="molecule type" value="mRNA"/>
</dbReference>
<dbReference type="EMBL" id="AK126862">
    <property type="protein sequence ID" value="BAG54383.1"/>
    <property type="molecule type" value="mRNA"/>
</dbReference>
<dbReference type="EMBL" id="DA769567">
    <property type="status" value="NOT_ANNOTATED_CDS"/>
    <property type="molecule type" value="mRNA"/>
</dbReference>
<dbReference type="EMBL" id="AC084346">
    <property type="status" value="NOT_ANNOTATED_CDS"/>
    <property type="molecule type" value="Genomic_DNA"/>
</dbReference>
<dbReference type="EMBL" id="CH471060">
    <property type="protein sequence ID" value="EAW91704.1"/>
    <property type="molecule type" value="Genomic_DNA"/>
</dbReference>
<dbReference type="EMBL" id="BC047619">
    <property type="protein sequence ID" value="AAH47619.1"/>
    <property type="molecule type" value="mRNA"/>
</dbReference>
<dbReference type="EMBL" id="BC098343">
    <property type="protein sequence ID" value="AAH98343.1"/>
    <property type="molecule type" value="mRNA"/>
</dbReference>
<dbReference type="CCDS" id="CCDS55262.1">
    <molecule id="Q9P0J1-2"/>
</dbReference>
<dbReference type="CCDS" id="CCDS6259.1">
    <molecule id="Q9P0J1-1"/>
</dbReference>
<dbReference type="RefSeq" id="NP_001155251.1">
    <molecule id="Q9P0J1-2"/>
    <property type="nucleotide sequence ID" value="NM_001161779.2"/>
</dbReference>
<dbReference type="RefSeq" id="NP_001155252.1">
    <molecule id="Q9P0J1-2"/>
    <property type="nucleotide sequence ID" value="NM_001161780.2"/>
</dbReference>
<dbReference type="RefSeq" id="NP_001155253.1">
    <molecule id="Q9P0J1-1"/>
    <property type="nucleotide sequence ID" value="NM_001161781.2"/>
</dbReference>
<dbReference type="RefSeq" id="NP_060914.2">
    <molecule id="Q9P0J1-1"/>
    <property type="nucleotide sequence ID" value="NM_018444.3"/>
</dbReference>
<dbReference type="RefSeq" id="XP_011515438.1">
    <property type="nucleotide sequence ID" value="XM_011517136.1"/>
</dbReference>
<dbReference type="RefSeq" id="XP_047277862.1">
    <molecule id="Q9P0J1-1"/>
    <property type="nucleotide sequence ID" value="XM_047421906.1"/>
</dbReference>
<dbReference type="RefSeq" id="XP_047277863.1">
    <molecule id="Q9P0J1-1"/>
    <property type="nucleotide sequence ID" value="XM_047421907.1"/>
</dbReference>
<dbReference type="RefSeq" id="XP_047277864.1">
    <molecule id="Q9P0J1-1"/>
    <property type="nucleotide sequence ID" value="XM_047421908.1"/>
</dbReference>
<dbReference type="RefSeq" id="XP_047277865.1">
    <molecule id="Q9P0J1-1"/>
    <property type="nucleotide sequence ID" value="XM_047421909.1"/>
</dbReference>
<dbReference type="RefSeq" id="XP_054216694.1">
    <molecule id="Q9P0J1-1"/>
    <property type="nucleotide sequence ID" value="XM_054360719.1"/>
</dbReference>
<dbReference type="RefSeq" id="XP_054216695.1">
    <molecule id="Q9P0J1-1"/>
    <property type="nucleotide sequence ID" value="XM_054360720.1"/>
</dbReference>
<dbReference type="RefSeq" id="XP_054216696.1">
    <molecule id="Q9P0J1-1"/>
    <property type="nucleotide sequence ID" value="XM_054360721.1"/>
</dbReference>
<dbReference type="SMR" id="Q9P0J1"/>
<dbReference type="BioGRID" id="120103">
    <property type="interactions" value="118"/>
</dbReference>
<dbReference type="ComplexPortal" id="CPX-6261">
    <property type="entry name" value="Mitochondrial pyruvate dehydrogenase serine/threonine phosphatase complex"/>
</dbReference>
<dbReference type="FunCoup" id="Q9P0J1">
    <property type="interactions" value="2155"/>
</dbReference>
<dbReference type="IntAct" id="Q9P0J1">
    <property type="interactions" value="50"/>
</dbReference>
<dbReference type="MINT" id="Q9P0J1"/>
<dbReference type="STRING" id="9606.ENSP00000379503"/>
<dbReference type="DEPOD" id="PDP1"/>
<dbReference type="GlyCosmos" id="Q9P0J1">
    <property type="glycosylation" value="1 site, 1 glycan"/>
</dbReference>
<dbReference type="GlyGen" id="Q9P0J1">
    <property type="glycosylation" value="3 sites, 1 O-linked glycan (1 site)"/>
</dbReference>
<dbReference type="iPTMnet" id="Q9P0J1"/>
<dbReference type="PhosphoSitePlus" id="Q9P0J1"/>
<dbReference type="SwissPalm" id="Q9P0J1"/>
<dbReference type="BioMuta" id="PDP1"/>
<dbReference type="DMDM" id="78099789"/>
<dbReference type="jPOST" id="Q9P0J1"/>
<dbReference type="MassIVE" id="Q9P0J1"/>
<dbReference type="PaxDb" id="9606-ENSP00000379503"/>
<dbReference type="PeptideAtlas" id="Q9P0J1"/>
<dbReference type="ProteomicsDB" id="83553">
    <molecule id="Q9P0J1-1"/>
</dbReference>
<dbReference type="Pumba" id="Q9P0J1"/>
<dbReference type="Antibodypedia" id="12838">
    <property type="antibodies" value="277 antibodies from 33 providers"/>
</dbReference>
<dbReference type="DNASU" id="54704"/>
<dbReference type="Ensembl" id="ENST00000297598.5">
    <molecule id="Q9P0J1-1"/>
    <property type="protein sequence ID" value="ENSP00000297598.4"/>
    <property type="gene ID" value="ENSG00000164951.16"/>
</dbReference>
<dbReference type="Ensembl" id="ENST00000396200.3">
    <molecule id="Q9P0J1-2"/>
    <property type="protein sequence ID" value="ENSP00000379503.3"/>
    <property type="gene ID" value="ENSG00000164951.16"/>
</dbReference>
<dbReference type="Ensembl" id="ENST00000517764.1">
    <molecule id="Q9P0J1-1"/>
    <property type="protein sequence ID" value="ENSP00000430380.1"/>
    <property type="gene ID" value="ENSG00000164951.16"/>
</dbReference>
<dbReference type="Ensembl" id="ENST00000520728.5">
    <molecule id="Q9P0J1-1"/>
    <property type="protein sequence ID" value="ENSP00000428317.1"/>
    <property type="gene ID" value="ENSG00000164951.16"/>
</dbReference>
<dbReference type="GeneID" id="54704"/>
<dbReference type="KEGG" id="hsa:54704"/>
<dbReference type="MANE-Select" id="ENST00000297598.5">
    <property type="protein sequence ID" value="ENSP00000297598.4"/>
    <property type="RefSeq nucleotide sequence ID" value="NM_018444.4"/>
    <property type="RefSeq protein sequence ID" value="NP_060914.2"/>
</dbReference>
<dbReference type="UCSC" id="uc003yge.4">
    <molecule id="Q9P0J1-1"/>
    <property type="organism name" value="human"/>
</dbReference>
<dbReference type="AGR" id="HGNC:9279"/>
<dbReference type="CTD" id="54704"/>
<dbReference type="DisGeNET" id="54704"/>
<dbReference type="GeneCards" id="PDP1"/>
<dbReference type="HGNC" id="HGNC:9279">
    <property type="gene designation" value="PDP1"/>
</dbReference>
<dbReference type="HPA" id="ENSG00000164951">
    <property type="expression patterns" value="Low tissue specificity"/>
</dbReference>
<dbReference type="MalaCards" id="PDP1"/>
<dbReference type="MIM" id="605993">
    <property type="type" value="gene"/>
</dbReference>
<dbReference type="MIM" id="608782">
    <property type="type" value="phenotype"/>
</dbReference>
<dbReference type="neXtProt" id="NX_Q9P0J1"/>
<dbReference type="OpenTargets" id="ENSG00000164951"/>
<dbReference type="Orphanet" id="79246">
    <property type="disease" value="Pyruvate dehydrogenase phosphatase deficiency"/>
</dbReference>
<dbReference type="PharmGKB" id="PA33607"/>
<dbReference type="VEuPathDB" id="HostDB:ENSG00000164951"/>
<dbReference type="eggNOG" id="KOG0700">
    <property type="taxonomic scope" value="Eukaryota"/>
</dbReference>
<dbReference type="GeneTree" id="ENSGT00940000156368"/>
<dbReference type="HOGENOM" id="CLU_021928_0_0_1"/>
<dbReference type="InParanoid" id="Q9P0J1"/>
<dbReference type="OMA" id="DVRTPPY"/>
<dbReference type="OrthoDB" id="420076at2759"/>
<dbReference type="PAN-GO" id="Q9P0J1">
    <property type="GO annotations" value="4 GO annotations based on evolutionary models"/>
</dbReference>
<dbReference type="PhylomeDB" id="Q9P0J1"/>
<dbReference type="TreeFam" id="TF313505"/>
<dbReference type="BRENDA" id="3.1.3.43">
    <property type="organism ID" value="2681"/>
</dbReference>
<dbReference type="PathwayCommons" id="Q9P0J1"/>
<dbReference type="Reactome" id="R-HSA-204174">
    <property type="pathway name" value="Regulation of pyruvate dehydrogenase (PDH) complex"/>
</dbReference>
<dbReference type="SignaLink" id="Q9P0J1"/>
<dbReference type="SIGNOR" id="Q9P0J1"/>
<dbReference type="BioGRID-ORCS" id="54704">
    <property type="hits" value="13 hits in 1164 CRISPR screens"/>
</dbReference>
<dbReference type="ChiTaRS" id="PDP1">
    <property type="organism name" value="human"/>
</dbReference>
<dbReference type="GeneWiki" id="Pyruvate_dehydrogenase_phosphatase"/>
<dbReference type="GenomeRNAi" id="54704"/>
<dbReference type="Pharos" id="Q9P0J1">
    <property type="development level" value="Tbio"/>
</dbReference>
<dbReference type="PRO" id="PR:Q9P0J1"/>
<dbReference type="Proteomes" id="UP000005640">
    <property type="component" value="Chromosome 8"/>
</dbReference>
<dbReference type="RNAct" id="Q9P0J1">
    <property type="molecule type" value="protein"/>
</dbReference>
<dbReference type="Bgee" id="ENSG00000164951">
    <property type="expression patterns" value="Expressed in lateral nuclear group of thalamus and 202 other cell types or tissues"/>
</dbReference>
<dbReference type="ExpressionAtlas" id="Q9P0J1">
    <property type="expression patterns" value="baseline and differential"/>
</dbReference>
<dbReference type="GO" id="GO:0005759">
    <property type="term" value="C:mitochondrial matrix"/>
    <property type="evidence" value="ECO:0000304"/>
    <property type="project" value="Reactome"/>
</dbReference>
<dbReference type="GO" id="GO:0005739">
    <property type="term" value="C:mitochondrion"/>
    <property type="evidence" value="ECO:0000314"/>
    <property type="project" value="UniProtKB"/>
</dbReference>
<dbReference type="GO" id="GO:0045253">
    <property type="term" value="C:pyruvate dehydrogenase (lipoamide) phosphatase complex"/>
    <property type="evidence" value="ECO:0000303"/>
    <property type="project" value="ComplexPortal"/>
</dbReference>
<dbReference type="GO" id="GO:0004741">
    <property type="term" value="F:[pyruvate dehydrogenase (acetyl-transferring)]-phosphatase activity"/>
    <property type="evidence" value="ECO:0000314"/>
    <property type="project" value="UniProtKB"/>
</dbReference>
<dbReference type="GO" id="GO:0046872">
    <property type="term" value="F:metal ion binding"/>
    <property type="evidence" value="ECO:0007669"/>
    <property type="project" value="UniProtKB-KW"/>
</dbReference>
<dbReference type="GO" id="GO:0004722">
    <property type="term" value="F:protein serine/threonine phosphatase activity"/>
    <property type="evidence" value="ECO:0000314"/>
    <property type="project" value="UniProtKB"/>
</dbReference>
<dbReference type="GO" id="GO:0035970">
    <property type="term" value="P:peptidyl-threonine dephosphorylation"/>
    <property type="evidence" value="ECO:0000314"/>
    <property type="project" value="UniProtKB"/>
</dbReference>
<dbReference type="GO" id="GO:0007165">
    <property type="term" value="P:signal transduction"/>
    <property type="evidence" value="ECO:0000318"/>
    <property type="project" value="GO_Central"/>
</dbReference>
<dbReference type="CDD" id="cd00143">
    <property type="entry name" value="PP2Cc"/>
    <property type="match status" value="1"/>
</dbReference>
<dbReference type="Gene3D" id="3.60.40.10">
    <property type="entry name" value="PPM-type phosphatase domain"/>
    <property type="match status" value="1"/>
</dbReference>
<dbReference type="InterPro" id="IPR015655">
    <property type="entry name" value="PP2C"/>
</dbReference>
<dbReference type="InterPro" id="IPR000222">
    <property type="entry name" value="PP2C_BS"/>
</dbReference>
<dbReference type="InterPro" id="IPR036457">
    <property type="entry name" value="PPM-type-like_dom_sf"/>
</dbReference>
<dbReference type="InterPro" id="IPR001932">
    <property type="entry name" value="PPM-type_phosphatase-like_dom"/>
</dbReference>
<dbReference type="PANTHER" id="PTHR13832:SF627">
    <property type="entry name" value="[PYRUVATE DEHYDROGENASE [ACETYL-TRANSFERRING]]-PHOSPHATASE 1, MITOCHONDRIAL"/>
    <property type="match status" value="1"/>
</dbReference>
<dbReference type="PANTHER" id="PTHR13832">
    <property type="entry name" value="PROTEIN PHOSPHATASE 2C"/>
    <property type="match status" value="1"/>
</dbReference>
<dbReference type="Pfam" id="PF00481">
    <property type="entry name" value="PP2C"/>
    <property type="match status" value="1"/>
</dbReference>
<dbReference type="SMART" id="SM00332">
    <property type="entry name" value="PP2Cc"/>
    <property type="match status" value="1"/>
</dbReference>
<dbReference type="SUPFAM" id="SSF81606">
    <property type="entry name" value="PP2C-like"/>
    <property type="match status" value="1"/>
</dbReference>
<dbReference type="PROSITE" id="PS01032">
    <property type="entry name" value="PPM_1"/>
    <property type="match status" value="1"/>
</dbReference>
<dbReference type="PROSITE" id="PS51746">
    <property type="entry name" value="PPM_2"/>
    <property type="match status" value="1"/>
</dbReference>
<sequence length="537" mass="61054">MPAPTQLFFPLIRNCELSRIYGTACYCHHKHLCCSSSYIPQSRLRYTPHPAYATFCRPKENWWQYTQGRRYASTPQKFYLTPPQVNSILKANEYSFKVPEFDGKNVSSILGFDSNQLPANAPIEDRRSAATCLQTRGMLLGVFDGHAGCACSQAVSERLFYYIAVSLLPHETLLEIENAVESGRALLPILQWHKHPNDYFSKEASKLYFNSLRTYWQELIDLNTGESTDIDVKEALINAFKRLDNDISLEAQVGDPNSFLNYLVLRVAFSGATACVAHVDGVDLHVANTGDSRAMLGVQEEDGSWSAVTLSNDHNAQNERELERLKLEHPKSEAKSVVKQDRLLGLLMPFRAFGDVKFKWSIDLQKRVIESGPDQLNDNEYTKFIPPNYHTPPYLTAEPEVTYHRLRPQDKFLVLATDGLWETMHRQDVVRIVGEYLTGMHHQQPIAVGGYKVTLGQMHGLLTERRTKMSSVFEDQNAATHLIRHAVGNNEFGTVDHERLSKMLSLPEELARMYRDDITIIVVQFNSHVVGAYQNQE</sequence>
<proteinExistence type="evidence at protein level"/>